<name>BIOP_SALTI</name>
<accession>P0A1U3</accession>
<accession>Q9L6N3</accession>
<evidence type="ECO:0000250" key="1">
    <source>
        <dbReference type="UniProtKB" id="P0ADP5"/>
    </source>
</evidence>
<evidence type="ECO:0000255" key="2"/>
<evidence type="ECO:0000305" key="3"/>
<gene>
    <name evidence="1" type="primary">bioP</name>
    <name type="synonym">yigM</name>
    <name type="ordered locus">STY3596</name>
    <name type="ordered locus">t3334</name>
</gene>
<organism>
    <name type="scientific">Salmonella typhi</name>
    <dbReference type="NCBI Taxonomy" id="90370"/>
    <lineage>
        <taxon>Bacteria</taxon>
        <taxon>Pseudomonadati</taxon>
        <taxon>Pseudomonadota</taxon>
        <taxon>Gammaproteobacteria</taxon>
        <taxon>Enterobacterales</taxon>
        <taxon>Enterobacteriaceae</taxon>
        <taxon>Salmonella</taxon>
    </lineage>
</organism>
<reference key="1">
    <citation type="journal article" date="2001" name="Nature">
        <title>Complete genome sequence of a multiple drug resistant Salmonella enterica serovar Typhi CT18.</title>
        <authorList>
            <person name="Parkhill J."/>
            <person name="Dougan G."/>
            <person name="James K.D."/>
            <person name="Thomson N.R."/>
            <person name="Pickard D."/>
            <person name="Wain J."/>
            <person name="Churcher C.M."/>
            <person name="Mungall K.L."/>
            <person name="Bentley S.D."/>
            <person name="Holden M.T.G."/>
            <person name="Sebaihia M."/>
            <person name="Baker S."/>
            <person name="Basham D."/>
            <person name="Brooks K."/>
            <person name="Chillingworth T."/>
            <person name="Connerton P."/>
            <person name="Cronin A."/>
            <person name="Davis P."/>
            <person name="Davies R.M."/>
            <person name="Dowd L."/>
            <person name="White N."/>
            <person name="Farrar J."/>
            <person name="Feltwell T."/>
            <person name="Hamlin N."/>
            <person name="Haque A."/>
            <person name="Hien T.T."/>
            <person name="Holroyd S."/>
            <person name="Jagels K."/>
            <person name="Krogh A."/>
            <person name="Larsen T.S."/>
            <person name="Leather S."/>
            <person name="Moule S."/>
            <person name="O'Gaora P."/>
            <person name="Parry C."/>
            <person name="Quail M.A."/>
            <person name="Rutherford K.M."/>
            <person name="Simmonds M."/>
            <person name="Skelton J."/>
            <person name="Stevens K."/>
            <person name="Whitehead S."/>
            <person name="Barrell B.G."/>
        </authorList>
    </citation>
    <scope>NUCLEOTIDE SEQUENCE [LARGE SCALE GENOMIC DNA]</scope>
    <source>
        <strain>CT18</strain>
    </source>
</reference>
<reference key="2">
    <citation type="journal article" date="2003" name="J. Bacteriol.">
        <title>Comparative genomics of Salmonella enterica serovar Typhi strains Ty2 and CT18.</title>
        <authorList>
            <person name="Deng W."/>
            <person name="Liou S.-R."/>
            <person name="Plunkett G. III"/>
            <person name="Mayhew G.F."/>
            <person name="Rose D.J."/>
            <person name="Burland V."/>
            <person name="Kodoyianni V."/>
            <person name="Schwartz D.C."/>
            <person name="Blattner F.R."/>
        </authorList>
    </citation>
    <scope>NUCLEOTIDE SEQUENCE [LARGE SCALE GENOMIC DNA]</scope>
    <source>
        <strain>ATCC 700931 / Ty2</strain>
    </source>
</reference>
<sequence>MALLIITTILWAFSFSLFGEYLAGHVDSYFAVLIRVGLAALVFLPFLRTRGHNLKTISLYMLVGAMQLGIMYMLSFHAYLYLTVSELLLFTVLTPLYITLIYDVMSQRRLRWGYAFSALLAVIGAGIIRYDRVTDHFWVGLLLVQLSNISFAIGMVGYKRLMETRPMPQHNAFAWFYLGAFLVAAVAWSLLGNAQKLPETTLQWSILVFLGVVASGIGYFMWNYGATQVDAGTLGIMNNMHVPAGLLVNLAIWHQQPHWPSFITGAAVILASLWVHRKWVAPRSAQTADDRRRDPASSE</sequence>
<protein>
    <recommendedName>
        <fullName evidence="1">Biotin transporter</fullName>
    </recommendedName>
</protein>
<dbReference type="EMBL" id="AL513382">
    <property type="protein sequence ID" value="CAD07929.1"/>
    <property type="molecule type" value="Genomic_DNA"/>
</dbReference>
<dbReference type="EMBL" id="AE014613">
    <property type="protein sequence ID" value="AAO70862.1"/>
    <property type="molecule type" value="Genomic_DNA"/>
</dbReference>
<dbReference type="RefSeq" id="NP_457788.1">
    <property type="nucleotide sequence ID" value="NC_003198.1"/>
</dbReference>
<dbReference type="RefSeq" id="WP_001196257.1">
    <property type="nucleotide sequence ID" value="NZ_WSUR01000033.1"/>
</dbReference>
<dbReference type="SMR" id="P0A1U3"/>
<dbReference type="STRING" id="220341.gene:17587448"/>
<dbReference type="KEGG" id="stt:t3334"/>
<dbReference type="KEGG" id="sty:STY3596"/>
<dbReference type="PATRIC" id="fig|220341.7.peg.3665"/>
<dbReference type="eggNOG" id="COG0697">
    <property type="taxonomic scope" value="Bacteria"/>
</dbReference>
<dbReference type="HOGENOM" id="CLU_085269_0_0_6"/>
<dbReference type="OMA" id="HTAFSWF"/>
<dbReference type="OrthoDB" id="1412048at2"/>
<dbReference type="Proteomes" id="UP000000541">
    <property type="component" value="Chromosome"/>
</dbReference>
<dbReference type="Proteomes" id="UP000002670">
    <property type="component" value="Chromosome"/>
</dbReference>
<dbReference type="GO" id="GO:0005886">
    <property type="term" value="C:plasma membrane"/>
    <property type="evidence" value="ECO:0007669"/>
    <property type="project" value="UniProtKB-SubCell"/>
</dbReference>
<dbReference type="InterPro" id="IPR004779">
    <property type="entry name" value="CO/AA/NH_transpt"/>
</dbReference>
<dbReference type="InterPro" id="IPR051258">
    <property type="entry name" value="Diverse_Substrate_Transporter"/>
</dbReference>
<dbReference type="InterPro" id="IPR000620">
    <property type="entry name" value="EamA_dom"/>
</dbReference>
<dbReference type="NCBIfam" id="TIGR00950">
    <property type="entry name" value="2A78"/>
    <property type="match status" value="1"/>
</dbReference>
<dbReference type="PANTHER" id="PTHR42920:SF5">
    <property type="entry name" value="EAMA DOMAIN-CONTAINING PROTEIN"/>
    <property type="match status" value="1"/>
</dbReference>
<dbReference type="PANTHER" id="PTHR42920">
    <property type="entry name" value="OS03G0707200 PROTEIN-RELATED"/>
    <property type="match status" value="1"/>
</dbReference>
<dbReference type="Pfam" id="PF00892">
    <property type="entry name" value="EamA"/>
    <property type="match status" value="2"/>
</dbReference>
<dbReference type="SUPFAM" id="SSF103481">
    <property type="entry name" value="Multidrug resistance efflux transporter EmrE"/>
    <property type="match status" value="2"/>
</dbReference>
<proteinExistence type="inferred from homology"/>
<feature type="chain" id="PRO_0000169665" description="Biotin transporter">
    <location>
        <begin position="1"/>
        <end position="299"/>
    </location>
</feature>
<feature type="transmembrane region" description="Helical" evidence="2">
    <location>
        <begin position="2"/>
        <end position="22"/>
    </location>
</feature>
<feature type="transmembrane region" description="Helical" evidence="2">
    <location>
        <begin position="26"/>
        <end position="46"/>
    </location>
</feature>
<feature type="transmembrane region" description="Helical" evidence="2">
    <location>
        <begin position="56"/>
        <end position="76"/>
    </location>
</feature>
<feature type="transmembrane region" description="Helical" evidence="2">
    <location>
        <begin position="81"/>
        <end position="101"/>
    </location>
</feature>
<feature type="transmembrane region" description="Helical" evidence="2">
    <location>
        <begin position="110"/>
        <end position="130"/>
    </location>
</feature>
<feature type="transmembrane region" description="Helical" evidence="2">
    <location>
        <begin position="137"/>
        <end position="157"/>
    </location>
</feature>
<feature type="transmembrane region" description="Helical" evidence="2">
    <location>
        <begin position="172"/>
        <end position="192"/>
    </location>
</feature>
<feature type="transmembrane region" description="Helical" evidence="2">
    <location>
        <begin position="202"/>
        <end position="222"/>
    </location>
</feature>
<feature type="transmembrane region" description="Helical" evidence="2">
    <location>
        <begin position="233"/>
        <end position="253"/>
    </location>
</feature>
<feature type="transmembrane region" description="Helical" evidence="2">
    <location>
        <begin position="256"/>
        <end position="276"/>
    </location>
</feature>
<feature type="domain" description="EamA 1" evidence="2">
    <location>
        <begin position="3"/>
        <end position="128"/>
    </location>
</feature>
<feature type="domain" description="EamA 2" evidence="2">
    <location>
        <begin position="139"/>
        <end position="274"/>
    </location>
</feature>
<comment type="function">
    <text evidence="1">Uptake of biotin.</text>
</comment>
<comment type="catalytic activity">
    <reaction evidence="1">
        <text>biotin(in) = biotin(out)</text>
        <dbReference type="Rhea" id="RHEA:28458"/>
        <dbReference type="ChEBI" id="CHEBI:57586"/>
    </reaction>
    <physiologicalReaction direction="right-to-left" evidence="1">
        <dbReference type="Rhea" id="RHEA:28460"/>
    </physiologicalReaction>
</comment>
<comment type="subcellular location">
    <subcellularLocation>
        <location evidence="1">Cell inner membrane</location>
        <topology evidence="2">Multi-pass membrane protein</topology>
    </subcellularLocation>
</comment>
<comment type="similarity">
    <text evidence="3">Belongs to the drug/metabolite transporter (DMT) superfamily. 10 TMS drug/metabolite exporter (DME) (TC 2.A.7.3) family.</text>
</comment>
<keyword id="KW-0997">Cell inner membrane</keyword>
<keyword id="KW-1003">Cell membrane</keyword>
<keyword id="KW-0472">Membrane</keyword>
<keyword id="KW-0677">Repeat</keyword>
<keyword id="KW-0812">Transmembrane</keyword>
<keyword id="KW-1133">Transmembrane helix</keyword>
<keyword id="KW-0813">Transport</keyword>